<sequence length="714" mass="79606">MSPEGEESHAEDNLYFHNTQMQSIHEETLAEESHAQSIQRSISRLSSFKHEDTDSESPIPVQKVIRHIKKTNTNTNTTKTKKRKLKVSKPRKNMSSSESVRQMYGSRKNGEQQGSIDGFLMSRFGDVDGCNESDRSSKLISQGEWESLSKFHEESNEKDKLLRKKIQRYYSEPQEELGEGCGMLSQASADPETKMTKEELESLYDLDSSTVFNQTTISAIGDMSEPTQVSEPCVVILSQTKVQSEASTQEDGADASVQEIKSSVPTQELFSTPEFVPAPLEQPVNKEVCSDQSIVVLEENVQSTQADDSDIVELISDSDPEPEEVSTKVQVLRSIYDSSGPVNDKQPSVASETVESDSTPIVSPVKTPQGTRMHVVQVASSNPSSPIKIVEENTEQQEEVFTDVESIYSTARTSFGTPKHTSPVILLESSDTDCDDNDNDVEPLSSMPMVKTVPKKRMRTTVLQVSAALKVQNYTDEKNNIKLRKIGDDIPVEVPTKDVEYEEIPDSQESVGGEGDNSVSIIEITREVHNNDYTGDESTDLFQVGLNKQDTCEDTSSPVVQIGGVENDILDSSLIEPVPEPESVPVPEEVQEQPQPTAIDKHTATQLREKFQLWGLKPVRGKEKMVEILQGISNFILPEHELLAVADKQELQSCIFMKLDAVIREGRAMYDRILSFEPIRIEELQMMLQSQDYYLELDVLRLYCDSSGITTTNA</sequence>
<dbReference type="EMBL" id="GG692395">
    <property type="protein sequence ID" value="EER35510.1"/>
    <property type="status" value="ALT_INIT"/>
    <property type="molecule type" value="Genomic_DNA"/>
</dbReference>
<dbReference type="RefSeq" id="XP_002545468.1">
    <property type="nucleotide sequence ID" value="XM_002545422.1"/>
</dbReference>
<dbReference type="SMR" id="C5M2G0"/>
<dbReference type="STRING" id="294747.C5M2G0"/>
<dbReference type="GeneID" id="8297249"/>
<dbReference type="KEGG" id="ctp:CTRG_00249"/>
<dbReference type="eggNOG" id="ENOG502RS18">
    <property type="taxonomic scope" value="Eukaryota"/>
</dbReference>
<dbReference type="HOGENOM" id="CLU_429039_0_0_1"/>
<dbReference type="OrthoDB" id="5349119at2759"/>
<dbReference type="Proteomes" id="UP000002037">
    <property type="component" value="Unassembled WGS sequence"/>
</dbReference>
<dbReference type="GO" id="GO:0033557">
    <property type="term" value="C:Slx1-Slx4 complex"/>
    <property type="evidence" value="ECO:0007669"/>
    <property type="project" value="UniProtKB-UniRule"/>
</dbReference>
<dbReference type="GO" id="GO:0017108">
    <property type="term" value="F:5'-flap endonuclease activity"/>
    <property type="evidence" value="ECO:0007669"/>
    <property type="project" value="InterPro"/>
</dbReference>
<dbReference type="GO" id="GO:0006310">
    <property type="term" value="P:DNA recombination"/>
    <property type="evidence" value="ECO:0007669"/>
    <property type="project" value="UniProtKB-UniRule"/>
</dbReference>
<dbReference type="GO" id="GO:0006281">
    <property type="term" value="P:DNA repair"/>
    <property type="evidence" value="ECO:0007669"/>
    <property type="project" value="UniProtKB-UniRule"/>
</dbReference>
<dbReference type="GO" id="GO:0006260">
    <property type="term" value="P:DNA replication"/>
    <property type="evidence" value="ECO:0007669"/>
    <property type="project" value="InterPro"/>
</dbReference>
<dbReference type="HAMAP" id="MF_03110">
    <property type="entry name" value="Endonuc_su_Slx4"/>
    <property type="match status" value="1"/>
</dbReference>
<dbReference type="InterPro" id="IPR027784">
    <property type="entry name" value="Slx4_ascomycetes"/>
</dbReference>
<dbReference type="InterPro" id="IPR018574">
    <property type="entry name" value="Structure-sp_endonuc_su_Slx4"/>
</dbReference>
<dbReference type="Pfam" id="PF09494">
    <property type="entry name" value="Slx4"/>
    <property type="match status" value="1"/>
</dbReference>
<reference key="1">
    <citation type="journal article" date="2009" name="Nature">
        <title>Evolution of pathogenicity and sexual reproduction in eight Candida genomes.</title>
        <authorList>
            <person name="Butler G."/>
            <person name="Rasmussen M.D."/>
            <person name="Lin M.F."/>
            <person name="Santos M.A.S."/>
            <person name="Sakthikumar S."/>
            <person name="Munro C.A."/>
            <person name="Rheinbay E."/>
            <person name="Grabherr M."/>
            <person name="Forche A."/>
            <person name="Reedy J.L."/>
            <person name="Agrafioti I."/>
            <person name="Arnaud M.B."/>
            <person name="Bates S."/>
            <person name="Brown A.J.P."/>
            <person name="Brunke S."/>
            <person name="Costanzo M.C."/>
            <person name="Fitzpatrick D.A."/>
            <person name="de Groot P.W.J."/>
            <person name="Harris D."/>
            <person name="Hoyer L.L."/>
            <person name="Hube B."/>
            <person name="Klis F.M."/>
            <person name="Kodira C."/>
            <person name="Lennard N."/>
            <person name="Logue M.E."/>
            <person name="Martin R."/>
            <person name="Neiman A.M."/>
            <person name="Nikolaou E."/>
            <person name="Quail M.A."/>
            <person name="Quinn J."/>
            <person name="Santos M.C."/>
            <person name="Schmitzberger F.F."/>
            <person name="Sherlock G."/>
            <person name="Shah P."/>
            <person name="Silverstein K.A.T."/>
            <person name="Skrzypek M.S."/>
            <person name="Soll D."/>
            <person name="Staggs R."/>
            <person name="Stansfield I."/>
            <person name="Stumpf M.P.H."/>
            <person name="Sudbery P.E."/>
            <person name="Srikantha T."/>
            <person name="Zeng Q."/>
            <person name="Berman J."/>
            <person name="Berriman M."/>
            <person name="Heitman J."/>
            <person name="Gow N.A.R."/>
            <person name="Lorenz M.C."/>
            <person name="Birren B.W."/>
            <person name="Kellis M."/>
            <person name="Cuomo C.A."/>
        </authorList>
    </citation>
    <scope>NUCLEOTIDE SEQUENCE [LARGE SCALE GENOMIC DNA]</scope>
    <source>
        <strain>ATCC MYA-3404 / T1</strain>
    </source>
</reference>
<keyword id="KW-0227">DNA damage</keyword>
<keyword id="KW-0233">DNA recombination</keyword>
<keyword id="KW-0234">DNA repair</keyword>
<keyword id="KW-0539">Nucleus</keyword>
<keyword id="KW-0597">Phosphoprotein</keyword>
<keyword id="KW-1185">Reference proteome</keyword>
<proteinExistence type="inferred from homology"/>
<evidence type="ECO:0000255" key="1">
    <source>
        <dbReference type="HAMAP-Rule" id="MF_03110"/>
    </source>
</evidence>
<evidence type="ECO:0000256" key="2">
    <source>
        <dbReference type="SAM" id="MobiDB-lite"/>
    </source>
</evidence>
<evidence type="ECO:0000305" key="3"/>
<accession>C5M2G0</accession>
<organism>
    <name type="scientific">Candida tropicalis (strain ATCC MYA-3404 / T1)</name>
    <name type="common">Yeast</name>
    <dbReference type="NCBI Taxonomy" id="294747"/>
    <lineage>
        <taxon>Eukaryota</taxon>
        <taxon>Fungi</taxon>
        <taxon>Dikarya</taxon>
        <taxon>Ascomycota</taxon>
        <taxon>Saccharomycotina</taxon>
        <taxon>Pichiomycetes</taxon>
        <taxon>Debaryomycetaceae</taxon>
        <taxon>Candida/Lodderomyces clade</taxon>
        <taxon>Candida</taxon>
    </lineage>
</organism>
<gene>
    <name evidence="1" type="primary">SLX4-1</name>
    <name type="ORF">CTRG_00249</name>
</gene>
<comment type="function">
    <text evidence="1">Regulatory subunit of the SLX1-SLX4 structure-specific endonuclease that resolves DNA secondary structures generated during DNA repair and recombination. Has endonuclease activity towards branched DNA substrates, introducing single-strand cuts in duplex DNA close to junctions with ss-DNA.</text>
</comment>
<comment type="subunit">
    <text evidence="1">Forms a heterodimer with SLX1.</text>
</comment>
<comment type="subcellular location">
    <subcellularLocation>
        <location evidence="1">Nucleus</location>
    </subcellularLocation>
</comment>
<comment type="PTM">
    <text evidence="1">Phosphorylated in response to DNA damage.</text>
</comment>
<comment type="similarity">
    <text evidence="1">Belongs to the SLX4 family.</text>
</comment>
<comment type="sequence caution" evidence="3">
    <conflict type="erroneous initiation">
        <sequence resource="EMBL-CDS" id="EER35510"/>
    </conflict>
</comment>
<name>SLX41_CANTT</name>
<feature type="chain" id="PRO_0000388023" description="Structure-specific endonuclease subunit SLX4 1">
    <location>
        <begin position="1"/>
        <end position="714"/>
    </location>
</feature>
<feature type="region of interest" description="Disordered" evidence="2">
    <location>
        <begin position="1"/>
        <end position="116"/>
    </location>
</feature>
<feature type="region of interest" description="Disordered" evidence="2">
    <location>
        <begin position="337"/>
        <end position="369"/>
    </location>
</feature>
<feature type="compositionally biased region" description="Basic and acidic residues" evidence="2">
    <location>
        <begin position="1"/>
        <end position="14"/>
    </location>
</feature>
<feature type="compositionally biased region" description="Basic and acidic residues" evidence="2">
    <location>
        <begin position="24"/>
        <end position="34"/>
    </location>
</feature>
<feature type="compositionally biased region" description="Low complexity" evidence="2">
    <location>
        <begin position="36"/>
        <end position="46"/>
    </location>
</feature>
<feature type="compositionally biased region" description="Basic residues" evidence="2">
    <location>
        <begin position="79"/>
        <end position="92"/>
    </location>
</feature>
<protein>
    <recommendedName>
        <fullName evidence="1">Structure-specific endonuclease subunit SLX4 1</fullName>
    </recommendedName>
</protein>